<keyword id="KW-0472">Membrane</keyword>
<keyword id="KW-0597">Phosphoprotein</keyword>
<keyword id="KW-1185">Reference proteome</keyword>
<keyword id="KW-0812">Transmembrane</keyword>
<keyword id="KW-1133">Transmembrane helix</keyword>
<name>REEP2_BOVIN</name>
<comment type="function">
    <text evidence="1">Required for endoplasmic reticulum (ER) network formation, shaping and remodeling. May enhance the cell surface expression of odorant receptors (By similarity).</text>
</comment>
<comment type="subunit">
    <text evidence="1">Interacts with odorant receptor proteins.</text>
</comment>
<comment type="subcellular location">
    <subcellularLocation>
        <location evidence="1">Membrane</location>
        <topology evidence="1">Multi-pass membrane protein</topology>
    </subcellularLocation>
</comment>
<comment type="similarity">
    <text evidence="5">Belongs to the DP1 family.</text>
</comment>
<proteinExistence type="evidence at transcript level"/>
<protein>
    <recommendedName>
        <fullName>Receptor expression-enhancing protein 2</fullName>
    </recommendedName>
</protein>
<accession>Q2KI30</accession>
<sequence length="254" mass="28440">MVSWIISRLVVLIFGTLYPAYSSYKAVKTKNVKEYVKWMMYWIVFAFFTTAETLTDIVLSWFPFYFELKIAFVIWLLSPYTKGSSVLYRKFVHPTLSNKEKEIDEYITQARDKSYETMMRVGKRGLNLAANAAVTAAAKGQGVLSEKLRSFSMQDLTLIRDEDALPLQGPDGRLRASPGSLLDTIEDLGDDPTLSVRSGTNQADPRTEISEDDTGDKAPKRVKPIKKVPKPEPPASKTLKTRPKKKTSAGGDSA</sequence>
<evidence type="ECO:0000250" key="1"/>
<evidence type="ECO:0000250" key="2">
    <source>
        <dbReference type="UniProtKB" id="Q8VCD6"/>
    </source>
</evidence>
<evidence type="ECO:0000255" key="3"/>
<evidence type="ECO:0000256" key="4">
    <source>
        <dbReference type="SAM" id="MobiDB-lite"/>
    </source>
</evidence>
<evidence type="ECO:0000305" key="5"/>
<feature type="chain" id="PRO_0000244384" description="Receptor expression-enhancing protein 2">
    <location>
        <begin position="1"/>
        <end position="254"/>
    </location>
</feature>
<feature type="transmembrane region" description="Helical" evidence="3">
    <location>
        <begin position="1"/>
        <end position="21"/>
    </location>
</feature>
<feature type="transmembrane region" description="Helical" evidence="3">
    <location>
        <begin position="35"/>
        <end position="55"/>
    </location>
</feature>
<feature type="region of interest" description="Disordered" evidence="4">
    <location>
        <begin position="164"/>
        <end position="254"/>
    </location>
</feature>
<feature type="compositionally biased region" description="Polar residues" evidence="4">
    <location>
        <begin position="195"/>
        <end position="204"/>
    </location>
</feature>
<feature type="compositionally biased region" description="Basic and acidic residues" evidence="4">
    <location>
        <begin position="205"/>
        <end position="219"/>
    </location>
</feature>
<feature type="modified residue" description="Phosphoserine" evidence="2">
    <location>
        <position position="152"/>
    </location>
</feature>
<reference key="1">
    <citation type="submission" date="2006-01" db="EMBL/GenBank/DDBJ databases">
        <authorList>
            <consortium name="NIH - Mammalian Gene Collection (MGC) project"/>
        </authorList>
    </citation>
    <scope>NUCLEOTIDE SEQUENCE [LARGE SCALE MRNA]</scope>
    <source>
        <strain>Hereford</strain>
        <tissue>Hypothalamus</tissue>
    </source>
</reference>
<gene>
    <name type="primary">REEP2</name>
</gene>
<dbReference type="EMBL" id="BC112790">
    <property type="protein sequence ID" value="AAI12791.1"/>
    <property type="molecule type" value="mRNA"/>
</dbReference>
<dbReference type="RefSeq" id="NP_001039790.1">
    <property type="nucleotide sequence ID" value="NM_001046325.2"/>
</dbReference>
<dbReference type="FunCoup" id="Q2KI30">
    <property type="interactions" value="1565"/>
</dbReference>
<dbReference type="STRING" id="9913.ENSBTAP00000056961"/>
<dbReference type="PaxDb" id="9913-ENSBTAP00000013281"/>
<dbReference type="Ensembl" id="ENSBTAT00000013281.5">
    <property type="protein sequence ID" value="ENSBTAP00000013281.4"/>
    <property type="gene ID" value="ENSBTAG00000010068.6"/>
</dbReference>
<dbReference type="GeneID" id="532432"/>
<dbReference type="KEGG" id="bta:532432"/>
<dbReference type="CTD" id="51308"/>
<dbReference type="VEuPathDB" id="HostDB:ENSBTAG00000010068"/>
<dbReference type="VGNC" id="VGNC:33852">
    <property type="gene designation" value="REEP2"/>
</dbReference>
<dbReference type="eggNOG" id="KOG1726">
    <property type="taxonomic scope" value="Eukaryota"/>
</dbReference>
<dbReference type="GeneTree" id="ENSGT00940000160001"/>
<dbReference type="HOGENOM" id="CLU_028431_0_1_1"/>
<dbReference type="InParanoid" id="Q2KI30"/>
<dbReference type="OMA" id="WAERCPV"/>
<dbReference type="OrthoDB" id="434647at2759"/>
<dbReference type="TreeFam" id="TF314177"/>
<dbReference type="Proteomes" id="UP000009136">
    <property type="component" value="Chromosome 7"/>
</dbReference>
<dbReference type="Bgee" id="ENSBTAG00000010068">
    <property type="expression patterns" value="Expressed in floor plate of diencephalon and 105 other cell types or tissues"/>
</dbReference>
<dbReference type="GO" id="GO:0005881">
    <property type="term" value="C:cytoplasmic microtubule"/>
    <property type="evidence" value="ECO:0000250"/>
    <property type="project" value="UniProtKB"/>
</dbReference>
<dbReference type="GO" id="GO:0005783">
    <property type="term" value="C:endoplasmic reticulum"/>
    <property type="evidence" value="ECO:0000250"/>
    <property type="project" value="UniProtKB"/>
</dbReference>
<dbReference type="GO" id="GO:0005789">
    <property type="term" value="C:endoplasmic reticulum membrane"/>
    <property type="evidence" value="ECO:0000318"/>
    <property type="project" value="GO_Central"/>
</dbReference>
<dbReference type="GO" id="GO:0071782">
    <property type="term" value="C:endoplasmic reticulum tubular network"/>
    <property type="evidence" value="ECO:0000318"/>
    <property type="project" value="GO_Central"/>
</dbReference>
<dbReference type="GO" id="GO:0008017">
    <property type="term" value="F:microtubule binding"/>
    <property type="evidence" value="ECO:0000318"/>
    <property type="project" value="GO_Central"/>
</dbReference>
<dbReference type="GO" id="GO:0031883">
    <property type="term" value="F:taste receptor binding"/>
    <property type="evidence" value="ECO:0000318"/>
    <property type="project" value="GO_Central"/>
</dbReference>
<dbReference type="GO" id="GO:0071786">
    <property type="term" value="P:endoplasmic reticulum tubular network organization"/>
    <property type="evidence" value="ECO:0000250"/>
    <property type="project" value="UniProtKB"/>
</dbReference>
<dbReference type="InterPro" id="IPR004345">
    <property type="entry name" value="TB2_DP1_HVA22"/>
</dbReference>
<dbReference type="PANTHER" id="PTHR12300">
    <property type="entry name" value="HVA22-LIKE PROTEINS"/>
    <property type="match status" value="1"/>
</dbReference>
<dbReference type="PANTHER" id="PTHR12300:SF29">
    <property type="entry name" value="RECEPTOR EXPRESSION-ENHANCING PROTEIN 2"/>
    <property type="match status" value="1"/>
</dbReference>
<dbReference type="Pfam" id="PF03134">
    <property type="entry name" value="TB2_DP1_HVA22"/>
    <property type="match status" value="1"/>
</dbReference>
<organism>
    <name type="scientific">Bos taurus</name>
    <name type="common">Bovine</name>
    <dbReference type="NCBI Taxonomy" id="9913"/>
    <lineage>
        <taxon>Eukaryota</taxon>
        <taxon>Metazoa</taxon>
        <taxon>Chordata</taxon>
        <taxon>Craniata</taxon>
        <taxon>Vertebrata</taxon>
        <taxon>Euteleostomi</taxon>
        <taxon>Mammalia</taxon>
        <taxon>Eutheria</taxon>
        <taxon>Laurasiatheria</taxon>
        <taxon>Artiodactyla</taxon>
        <taxon>Ruminantia</taxon>
        <taxon>Pecora</taxon>
        <taxon>Bovidae</taxon>
        <taxon>Bovinae</taxon>
        <taxon>Bos</taxon>
    </lineage>
</organism>